<keyword id="KW-1003">Cell membrane</keyword>
<keyword id="KW-0449">Lipoprotein</keyword>
<keyword id="KW-0472">Membrane</keyword>
<keyword id="KW-0564">Palmitate</keyword>
<keyword id="KW-0592">Phosphate transport</keyword>
<keyword id="KW-0964">Secreted</keyword>
<keyword id="KW-0732">Signal</keyword>
<keyword id="KW-0813">Transport</keyword>
<sequence length="370" mass="37848">MKFARSGAAVSLLAAGTLVLTACGGGTNSSSSGAGGTSGSVHCGGKKELHSSGSTAQENAMEQFVYAYVRSCPGYTLDYNANGSGAGVTQFLNNETDFAGSDVPLNPSTGQPDRAAERCGSPAWDLPTVFGPIAITYNIKGVSTLNLDGPTTAKIFNGTITVWNDPQIQALNSGTDLPPTPISVIFRSDKSGTSDNFQKYLDGASNGAWGKGASETFNGGVGVGASGNNGTSALLQTTDGSITYNEWSFAVGKQLNMAQIITSAGPDPVAITTESVGKTIAGAKIMGQGNDLVLDTSSFYRPTQPGSYPIVLATYEIVCSKYPDATTGTAVRAFMQAAIGPGQEGLDQYGSIPLPKSFQAKLAAAVNAIS</sequence>
<organism>
    <name type="scientific">Mycobacterium bovis (strain BCG / Pasteur 1173P2)</name>
    <dbReference type="NCBI Taxonomy" id="410289"/>
    <lineage>
        <taxon>Bacteria</taxon>
        <taxon>Bacillati</taxon>
        <taxon>Actinomycetota</taxon>
        <taxon>Actinomycetes</taxon>
        <taxon>Mycobacteriales</taxon>
        <taxon>Mycobacteriaceae</taxon>
        <taxon>Mycobacterium</taxon>
        <taxon>Mycobacterium tuberculosis complex</taxon>
    </lineage>
</organism>
<proteinExistence type="evidence at protein level"/>
<reference key="1">
    <citation type="journal article" date="2007" name="Proc. Natl. Acad. Sci. U.S.A.">
        <title>Genome plasticity of BCG and impact on vaccine efficacy.</title>
        <authorList>
            <person name="Brosch R."/>
            <person name="Gordon S.V."/>
            <person name="Garnier T."/>
            <person name="Eiglmeier K."/>
            <person name="Frigui W."/>
            <person name="Valenti P."/>
            <person name="Dos Santos S."/>
            <person name="Duthoy S."/>
            <person name="Lacroix C."/>
            <person name="Garcia-Pelayo C."/>
            <person name="Inwald J.K."/>
            <person name="Golby P."/>
            <person name="Garcia J.N."/>
            <person name="Hewinson R.G."/>
            <person name="Behr M.A."/>
            <person name="Quail M.A."/>
            <person name="Churcher C."/>
            <person name="Barrell B.G."/>
            <person name="Parkhill J."/>
            <person name="Cole S.T."/>
        </authorList>
    </citation>
    <scope>NUCLEOTIDE SEQUENCE [LARGE SCALE GENOMIC DNA]</scope>
    <source>
        <strain>BCG / Pasteur 1173P2</strain>
    </source>
</reference>
<reference key="2">
    <citation type="journal article" date="1997" name="J. Bacteriol.">
        <title>Three different putative phosphate transport receptors are encoded by the Mycobacterium tuberculosis genome and are present at the surface of Mycobacterium bovis BCG.</title>
        <authorList>
            <person name="Lefevre P."/>
            <person name="Braibant M."/>
            <person name="de Wit L."/>
            <person name="Kalai M."/>
            <person name="Roeper D."/>
            <person name="Groetzinger J."/>
            <person name="Delville J.-P."/>
            <person name="Peirs P."/>
            <person name="Ooms J."/>
            <person name="Huygen K."/>
            <person name="Content J."/>
        </authorList>
    </citation>
    <scope>SUBCELLULAR LOCATION</scope>
    <scope>INDUCTION BY PHOSPHATE STARVATION</scope>
    <source>
        <strain>BCG</strain>
    </source>
</reference>
<name>PSTS2_MYCBP</name>
<gene>
    <name type="primary">pstS2</name>
    <name type="ordered locus">BCG_0985c</name>
</gene>
<accession>A0A0H3MBL5</accession>
<comment type="function">
    <text evidence="2 6">Functions in inorganic phosphate uptake, a phosphate-binding protein, although probably not the main uptake protein under phosphate starvation (By similarity). Part of the ABC transporter complex PstSACB involved in phosphate import (Probable).</text>
</comment>
<comment type="subunit">
    <text evidence="6">The complex is composed of two ATP-binding proteins (PstB), two transmembrane proteins (PstC and PstA) and a solute-binding protein (PstS).</text>
</comment>
<comment type="subcellular location">
    <subcellularLocation>
        <location evidence="3">Cell membrane</location>
        <topology evidence="3">Lipid-anchor</topology>
    </subcellularLocation>
    <subcellularLocation>
        <location evidence="4">Secreted</location>
    </subcellularLocation>
    <text evidence="4">Present on the cell surface.</text>
</comment>
<comment type="induction">
    <text evidence="4">By phosphate starvation (at protein level).</text>
</comment>
<comment type="similarity">
    <text evidence="6">Belongs to the PstS family.</text>
</comment>
<feature type="signal peptide" evidence="3">
    <location>
        <begin position="1"/>
        <end position="22"/>
    </location>
</feature>
<feature type="chain" id="PRO_5002615602" description="Phosphate-binding protein PstS2">
    <location>
        <begin position="23"/>
        <end position="370"/>
    </location>
</feature>
<feature type="binding site" evidence="1">
    <location>
        <begin position="54"/>
        <end position="56"/>
    </location>
    <ligand>
        <name>phosphate</name>
        <dbReference type="ChEBI" id="CHEBI:43474"/>
    </ligand>
</feature>
<feature type="binding site" evidence="1">
    <location>
        <position position="84"/>
    </location>
    <ligand>
        <name>phosphate</name>
        <dbReference type="ChEBI" id="CHEBI:43474"/>
    </ligand>
</feature>
<feature type="binding site" evidence="1">
    <location>
        <position position="102"/>
    </location>
    <ligand>
        <name>phosphate</name>
        <dbReference type="ChEBI" id="CHEBI:43474"/>
    </ligand>
</feature>
<feature type="binding site" evidence="1">
    <location>
        <begin position="191"/>
        <end position="193"/>
    </location>
    <ligand>
        <name>phosphate</name>
        <dbReference type="ChEBI" id="CHEBI:43474"/>
    </ligand>
</feature>
<feature type="lipid moiety-binding region" description="N-palmitoyl cysteine" evidence="3">
    <location>
        <position position="23"/>
    </location>
</feature>
<feature type="lipid moiety-binding region" description="S-diacylglycerol cysteine" evidence="3">
    <location>
        <position position="23"/>
    </location>
</feature>
<dbReference type="EMBL" id="AM408590">
    <property type="protein sequence ID" value="CAL70971.1"/>
    <property type="molecule type" value="Genomic_DNA"/>
</dbReference>
<dbReference type="SMR" id="A0A0H3MBL5"/>
<dbReference type="KEGG" id="mbb:BCG_0985c"/>
<dbReference type="HOGENOM" id="CLU_034528_0_0_11"/>
<dbReference type="Proteomes" id="UP000001472">
    <property type="component" value="Chromosome"/>
</dbReference>
<dbReference type="GO" id="GO:0043190">
    <property type="term" value="C:ATP-binding cassette (ABC) transporter complex"/>
    <property type="evidence" value="ECO:0007669"/>
    <property type="project" value="InterPro"/>
</dbReference>
<dbReference type="GO" id="GO:0005576">
    <property type="term" value="C:extracellular region"/>
    <property type="evidence" value="ECO:0007669"/>
    <property type="project" value="UniProtKB-SubCell"/>
</dbReference>
<dbReference type="GO" id="GO:0042301">
    <property type="term" value="F:phosphate ion binding"/>
    <property type="evidence" value="ECO:0007669"/>
    <property type="project" value="InterPro"/>
</dbReference>
<dbReference type="GO" id="GO:0035435">
    <property type="term" value="P:phosphate ion transmembrane transport"/>
    <property type="evidence" value="ECO:0007669"/>
    <property type="project" value="InterPro"/>
</dbReference>
<dbReference type="CDD" id="cd13565">
    <property type="entry name" value="PBP2_PstS"/>
    <property type="match status" value="1"/>
</dbReference>
<dbReference type="Gene3D" id="3.40.190.10">
    <property type="entry name" value="Periplasmic binding protein-like II"/>
    <property type="match status" value="2"/>
</dbReference>
<dbReference type="InterPro" id="IPR005673">
    <property type="entry name" value="ABC_phos-bd_PstS"/>
</dbReference>
<dbReference type="InterPro" id="IPR024370">
    <property type="entry name" value="PBP_domain"/>
</dbReference>
<dbReference type="InterPro" id="IPR050962">
    <property type="entry name" value="Phosphate-bind_PstS"/>
</dbReference>
<dbReference type="NCBIfam" id="TIGR00975">
    <property type="entry name" value="3a0107s03"/>
    <property type="match status" value="1"/>
</dbReference>
<dbReference type="PANTHER" id="PTHR42996">
    <property type="entry name" value="PHOSPHATE-BINDING PROTEIN PSTS"/>
    <property type="match status" value="1"/>
</dbReference>
<dbReference type="PANTHER" id="PTHR42996:SF1">
    <property type="entry name" value="PHOSPHATE-BINDING PROTEIN PSTS"/>
    <property type="match status" value="1"/>
</dbReference>
<dbReference type="Pfam" id="PF12849">
    <property type="entry name" value="PBP_like_2"/>
    <property type="match status" value="1"/>
</dbReference>
<dbReference type="PIRSF" id="PIRSF002756">
    <property type="entry name" value="PstS"/>
    <property type="match status" value="1"/>
</dbReference>
<dbReference type="SUPFAM" id="SSF53850">
    <property type="entry name" value="Periplasmic binding protein-like II"/>
    <property type="match status" value="1"/>
</dbReference>
<dbReference type="PROSITE" id="PS51257">
    <property type="entry name" value="PROKAR_LIPOPROTEIN"/>
    <property type="match status" value="1"/>
</dbReference>
<evidence type="ECO:0000250" key="1">
    <source>
        <dbReference type="UniProtKB" id="P9WGT7"/>
    </source>
</evidence>
<evidence type="ECO:0000250" key="2">
    <source>
        <dbReference type="UniProtKB" id="P9WGT9"/>
    </source>
</evidence>
<evidence type="ECO:0000255" key="3">
    <source>
        <dbReference type="PROSITE-ProRule" id="PRU00303"/>
    </source>
</evidence>
<evidence type="ECO:0000269" key="4">
    <source>
    </source>
</evidence>
<evidence type="ECO:0000303" key="5">
    <source>
    </source>
</evidence>
<evidence type="ECO:0000305" key="6"/>
<protein>
    <recommendedName>
        <fullName evidence="5">Phosphate-binding protein PstS2</fullName>
        <shortName>PstS-2</shortName>
    </recommendedName>
    <alternativeName>
        <fullName>38-kDa lipoprotein</fullName>
        <shortName>P38</shortName>
    </alternativeName>
</protein>